<feature type="chain" id="PRO_0000292232" description="Photosystem II reaction center protein J">
    <location>
        <begin position="1"/>
        <end position="65"/>
    </location>
</feature>
<feature type="transmembrane region" description="Helical" evidence="1">
    <location>
        <begin position="35"/>
        <end position="55"/>
    </location>
</feature>
<name>PSBJ_PROM1</name>
<reference key="1">
    <citation type="journal article" date="2007" name="PLoS Genet.">
        <title>Patterns and implications of gene gain and loss in the evolution of Prochlorococcus.</title>
        <authorList>
            <person name="Kettler G.C."/>
            <person name="Martiny A.C."/>
            <person name="Huang K."/>
            <person name="Zucker J."/>
            <person name="Coleman M.L."/>
            <person name="Rodrigue S."/>
            <person name="Chen F."/>
            <person name="Lapidus A."/>
            <person name="Ferriera S."/>
            <person name="Johnson J."/>
            <person name="Steglich C."/>
            <person name="Church G.M."/>
            <person name="Richardson P."/>
            <person name="Chisholm S.W."/>
        </authorList>
    </citation>
    <scope>NUCLEOTIDE SEQUENCE [LARGE SCALE GENOMIC DNA]</scope>
    <source>
        <strain>NATL1A</strain>
    </source>
</reference>
<dbReference type="EMBL" id="CP000553">
    <property type="protein sequence ID" value="ABM74943.1"/>
    <property type="molecule type" value="Genomic_DNA"/>
</dbReference>
<dbReference type="RefSeq" id="WP_011823141.1">
    <property type="nucleotide sequence ID" value="NC_008819.1"/>
</dbReference>
<dbReference type="SMR" id="A2C0D3"/>
<dbReference type="KEGG" id="pme:NATL1_03791"/>
<dbReference type="eggNOG" id="ENOG5030SSF">
    <property type="taxonomic scope" value="Bacteria"/>
</dbReference>
<dbReference type="HOGENOM" id="CLU_2829784_0_0_3"/>
<dbReference type="Proteomes" id="UP000002592">
    <property type="component" value="Chromosome"/>
</dbReference>
<dbReference type="GO" id="GO:0009539">
    <property type="term" value="C:photosystem II reaction center"/>
    <property type="evidence" value="ECO:0007669"/>
    <property type="project" value="InterPro"/>
</dbReference>
<dbReference type="GO" id="GO:0031676">
    <property type="term" value="C:plasma membrane-derived thylakoid membrane"/>
    <property type="evidence" value="ECO:0007669"/>
    <property type="project" value="UniProtKB-SubCell"/>
</dbReference>
<dbReference type="GO" id="GO:0015979">
    <property type="term" value="P:photosynthesis"/>
    <property type="evidence" value="ECO:0007669"/>
    <property type="project" value="UniProtKB-UniRule"/>
</dbReference>
<dbReference type="Gene3D" id="6.10.250.2070">
    <property type="match status" value="1"/>
</dbReference>
<dbReference type="HAMAP" id="MF_01305">
    <property type="entry name" value="PSII_PsbJ"/>
    <property type="match status" value="1"/>
</dbReference>
<dbReference type="InterPro" id="IPR002682">
    <property type="entry name" value="PSII_PsbJ"/>
</dbReference>
<dbReference type="InterPro" id="IPR037267">
    <property type="entry name" value="PSII_PsbJ_sf"/>
</dbReference>
<dbReference type="NCBIfam" id="NF002722">
    <property type="entry name" value="PRK02565.1"/>
    <property type="match status" value="1"/>
</dbReference>
<dbReference type="PANTHER" id="PTHR34812">
    <property type="entry name" value="PHOTOSYSTEM II REACTION CENTER PROTEIN J"/>
    <property type="match status" value="1"/>
</dbReference>
<dbReference type="PANTHER" id="PTHR34812:SF3">
    <property type="entry name" value="PHOTOSYSTEM II REACTION CENTER PROTEIN J"/>
    <property type="match status" value="1"/>
</dbReference>
<dbReference type="Pfam" id="PF01788">
    <property type="entry name" value="PsbJ"/>
    <property type="match status" value="1"/>
</dbReference>
<dbReference type="SUPFAM" id="SSF161021">
    <property type="entry name" value="Photosystem II reaction center protein J, PsbJ"/>
    <property type="match status" value="1"/>
</dbReference>
<gene>
    <name evidence="1" type="primary">psbJ</name>
    <name type="ordered locus">NATL1_03791</name>
</gene>
<protein>
    <recommendedName>
        <fullName evidence="1">Photosystem II reaction center protein J</fullName>
        <shortName evidence="1">PSII-J</shortName>
    </recommendedName>
</protein>
<evidence type="ECO:0000255" key="1">
    <source>
        <dbReference type="HAMAP-Rule" id="MF_01305"/>
    </source>
</evidence>
<evidence type="ECO:0000305" key="2"/>
<sequence>MSKLKGPDGRVGDRLPDGRPAISWQRRWTEGALPLWLVATAGGTAVIFVLGIFFYGSYTGIGNAG</sequence>
<comment type="function">
    <text evidence="1">One of the components of the core complex of photosystem II (PSII). PSII is a light-driven water:plastoquinone oxidoreductase that uses light energy to abstract electrons from H(2)O, generating O(2) and a proton gradient subsequently used for ATP formation. It consists of a core antenna complex that captures photons, and an electron transfer chain that converts photonic excitation into a charge separation.</text>
</comment>
<comment type="subunit">
    <text evidence="2">PSII is composed of 1 copy each of membrane proteins PsbA, PsbB, PsbC, PsbD, PsbE, PsbF, PsbH, PsbI, PsbJ, PsbK, PsbL, PsbM, PsbT, PsbX, PsbY, Psb30/Ycf12, peripheral proteins PsbO, CyanoQ (PsbQ), PsbU, PsbV and a large number of cofactors. It forms dimeric complexes.</text>
</comment>
<comment type="subcellular location">
    <subcellularLocation>
        <location evidence="1">Cellular thylakoid membrane</location>
        <topology evidence="1">Single-pass membrane protein</topology>
    </subcellularLocation>
</comment>
<comment type="similarity">
    <text evidence="1">Belongs to the PsbJ family.</text>
</comment>
<organism>
    <name type="scientific">Prochlorococcus marinus (strain NATL1A)</name>
    <dbReference type="NCBI Taxonomy" id="167555"/>
    <lineage>
        <taxon>Bacteria</taxon>
        <taxon>Bacillati</taxon>
        <taxon>Cyanobacteriota</taxon>
        <taxon>Cyanophyceae</taxon>
        <taxon>Synechococcales</taxon>
        <taxon>Prochlorococcaceae</taxon>
        <taxon>Prochlorococcus</taxon>
    </lineage>
</organism>
<keyword id="KW-0472">Membrane</keyword>
<keyword id="KW-0602">Photosynthesis</keyword>
<keyword id="KW-0604">Photosystem II</keyword>
<keyword id="KW-0674">Reaction center</keyword>
<keyword id="KW-0793">Thylakoid</keyword>
<keyword id="KW-0812">Transmembrane</keyword>
<keyword id="KW-1133">Transmembrane helix</keyword>
<accession>A2C0D3</accession>
<proteinExistence type="inferred from homology"/>